<protein>
    <recommendedName>
        <fullName evidence="1">tRNA modification GTPase MnmE</fullName>
        <ecNumber evidence="1">3.6.-.-</ecNumber>
    </recommendedName>
</protein>
<reference key="1">
    <citation type="submission" date="2006-11" db="EMBL/GenBank/DDBJ databases">
        <title>Sequence of Campylobacter fetus subsp. fetus 82-40.</title>
        <authorList>
            <person name="Fouts D.E."/>
            <person name="Nelson K.E."/>
        </authorList>
    </citation>
    <scope>NUCLEOTIDE SEQUENCE [LARGE SCALE GENOMIC DNA]</scope>
    <source>
        <strain>82-40</strain>
    </source>
</reference>
<comment type="function">
    <text evidence="1">Exhibits a very high intrinsic GTPase hydrolysis rate. Involved in the addition of a carboxymethylaminomethyl (cmnm) group at the wobble position (U34) of certain tRNAs, forming tRNA-cmnm(5)s(2)U34.</text>
</comment>
<comment type="cofactor">
    <cofactor evidence="1">
        <name>K(+)</name>
        <dbReference type="ChEBI" id="CHEBI:29103"/>
    </cofactor>
    <text evidence="1">Binds 1 potassium ion per subunit.</text>
</comment>
<comment type="subunit">
    <text evidence="1">Homodimer. Heterotetramer of two MnmE and two MnmG subunits.</text>
</comment>
<comment type="subcellular location">
    <subcellularLocation>
        <location evidence="1">Cytoplasm</location>
    </subcellularLocation>
</comment>
<comment type="similarity">
    <text evidence="1">Belongs to the TRAFAC class TrmE-Era-EngA-EngB-Septin-like GTPase superfamily. TrmE GTPase family.</text>
</comment>
<evidence type="ECO:0000255" key="1">
    <source>
        <dbReference type="HAMAP-Rule" id="MF_00379"/>
    </source>
</evidence>
<accession>A0RNG2</accession>
<organism>
    <name type="scientific">Campylobacter fetus subsp. fetus (strain 82-40)</name>
    <dbReference type="NCBI Taxonomy" id="360106"/>
    <lineage>
        <taxon>Bacteria</taxon>
        <taxon>Pseudomonadati</taxon>
        <taxon>Campylobacterota</taxon>
        <taxon>Epsilonproteobacteria</taxon>
        <taxon>Campylobacterales</taxon>
        <taxon>Campylobacteraceae</taxon>
        <taxon>Campylobacter</taxon>
    </lineage>
</organism>
<dbReference type="EC" id="3.6.-.-" evidence="1"/>
<dbReference type="EMBL" id="CP000487">
    <property type="protein sequence ID" value="ABK82483.1"/>
    <property type="molecule type" value="Genomic_DNA"/>
</dbReference>
<dbReference type="RefSeq" id="WP_011731868.1">
    <property type="nucleotide sequence ID" value="NC_008599.1"/>
</dbReference>
<dbReference type="SMR" id="A0RNG2"/>
<dbReference type="GeneID" id="61064401"/>
<dbReference type="KEGG" id="cff:CFF8240_0555"/>
<dbReference type="eggNOG" id="COG0486">
    <property type="taxonomic scope" value="Bacteria"/>
</dbReference>
<dbReference type="HOGENOM" id="CLU_019624_4_1_7"/>
<dbReference type="Proteomes" id="UP000000760">
    <property type="component" value="Chromosome"/>
</dbReference>
<dbReference type="GO" id="GO:0005829">
    <property type="term" value="C:cytosol"/>
    <property type="evidence" value="ECO:0007669"/>
    <property type="project" value="TreeGrafter"/>
</dbReference>
<dbReference type="GO" id="GO:0005525">
    <property type="term" value="F:GTP binding"/>
    <property type="evidence" value="ECO:0007669"/>
    <property type="project" value="UniProtKB-UniRule"/>
</dbReference>
<dbReference type="GO" id="GO:0003924">
    <property type="term" value="F:GTPase activity"/>
    <property type="evidence" value="ECO:0007669"/>
    <property type="project" value="UniProtKB-UniRule"/>
</dbReference>
<dbReference type="GO" id="GO:0046872">
    <property type="term" value="F:metal ion binding"/>
    <property type="evidence" value="ECO:0007669"/>
    <property type="project" value="UniProtKB-KW"/>
</dbReference>
<dbReference type="GO" id="GO:0030488">
    <property type="term" value="P:tRNA methylation"/>
    <property type="evidence" value="ECO:0007669"/>
    <property type="project" value="TreeGrafter"/>
</dbReference>
<dbReference type="GO" id="GO:0002098">
    <property type="term" value="P:tRNA wobble uridine modification"/>
    <property type="evidence" value="ECO:0007669"/>
    <property type="project" value="TreeGrafter"/>
</dbReference>
<dbReference type="CDD" id="cd04164">
    <property type="entry name" value="trmE"/>
    <property type="match status" value="1"/>
</dbReference>
<dbReference type="CDD" id="cd14858">
    <property type="entry name" value="TrmE_N"/>
    <property type="match status" value="1"/>
</dbReference>
<dbReference type="Gene3D" id="3.40.50.300">
    <property type="entry name" value="P-loop containing nucleotide triphosphate hydrolases"/>
    <property type="match status" value="1"/>
</dbReference>
<dbReference type="Gene3D" id="3.30.1360.120">
    <property type="entry name" value="Probable tRNA modification gtpase trme, domain 1"/>
    <property type="match status" value="1"/>
</dbReference>
<dbReference type="Gene3D" id="1.20.120.430">
    <property type="entry name" value="tRNA modification GTPase MnmE domain 2"/>
    <property type="match status" value="1"/>
</dbReference>
<dbReference type="HAMAP" id="MF_00379">
    <property type="entry name" value="GTPase_MnmE"/>
    <property type="match status" value="1"/>
</dbReference>
<dbReference type="InterPro" id="IPR031168">
    <property type="entry name" value="G_TrmE"/>
</dbReference>
<dbReference type="InterPro" id="IPR006073">
    <property type="entry name" value="GTP-bd"/>
</dbReference>
<dbReference type="InterPro" id="IPR018948">
    <property type="entry name" value="GTP-bd_TrmE_N"/>
</dbReference>
<dbReference type="InterPro" id="IPR004520">
    <property type="entry name" value="GTPase_MnmE"/>
</dbReference>
<dbReference type="InterPro" id="IPR027368">
    <property type="entry name" value="MnmE_dom2"/>
</dbReference>
<dbReference type="InterPro" id="IPR025867">
    <property type="entry name" value="MnmE_helical"/>
</dbReference>
<dbReference type="InterPro" id="IPR027417">
    <property type="entry name" value="P-loop_NTPase"/>
</dbReference>
<dbReference type="InterPro" id="IPR005225">
    <property type="entry name" value="Small_GTP-bd"/>
</dbReference>
<dbReference type="InterPro" id="IPR027266">
    <property type="entry name" value="TrmE/GcvT_dom1"/>
</dbReference>
<dbReference type="NCBIfam" id="TIGR00450">
    <property type="entry name" value="mnmE_trmE_thdF"/>
    <property type="match status" value="1"/>
</dbReference>
<dbReference type="NCBIfam" id="TIGR00231">
    <property type="entry name" value="small_GTP"/>
    <property type="match status" value="1"/>
</dbReference>
<dbReference type="PANTHER" id="PTHR42714">
    <property type="entry name" value="TRNA MODIFICATION GTPASE GTPBP3"/>
    <property type="match status" value="1"/>
</dbReference>
<dbReference type="PANTHER" id="PTHR42714:SF2">
    <property type="entry name" value="TRNA MODIFICATION GTPASE GTPBP3, MITOCHONDRIAL"/>
    <property type="match status" value="1"/>
</dbReference>
<dbReference type="Pfam" id="PF01926">
    <property type="entry name" value="MMR_HSR1"/>
    <property type="match status" value="1"/>
</dbReference>
<dbReference type="Pfam" id="PF12631">
    <property type="entry name" value="MnmE_helical"/>
    <property type="match status" value="1"/>
</dbReference>
<dbReference type="Pfam" id="PF10396">
    <property type="entry name" value="TrmE_N"/>
    <property type="match status" value="1"/>
</dbReference>
<dbReference type="SUPFAM" id="SSF52540">
    <property type="entry name" value="P-loop containing nucleoside triphosphate hydrolases"/>
    <property type="match status" value="1"/>
</dbReference>
<dbReference type="PROSITE" id="PS51709">
    <property type="entry name" value="G_TRME"/>
    <property type="match status" value="1"/>
</dbReference>
<name>MNME_CAMFF</name>
<feature type="chain" id="PRO_0000345754" description="tRNA modification GTPase MnmE">
    <location>
        <begin position="1"/>
        <end position="438"/>
    </location>
</feature>
<feature type="domain" description="TrmE-type G">
    <location>
        <begin position="211"/>
        <end position="363"/>
    </location>
</feature>
<feature type="binding site" evidence="1">
    <location>
        <position position="19"/>
    </location>
    <ligand>
        <name>(6S)-5-formyl-5,6,7,8-tetrahydrofolate</name>
        <dbReference type="ChEBI" id="CHEBI:57457"/>
    </ligand>
</feature>
<feature type="binding site" evidence="1">
    <location>
        <position position="76"/>
    </location>
    <ligand>
        <name>(6S)-5-formyl-5,6,7,8-tetrahydrofolate</name>
        <dbReference type="ChEBI" id="CHEBI:57457"/>
    </ligand>
</feature>
<feature type="binding site" evidence="1">
    <location>
        <position position="115"/>
    </location>
    <ligand>
        <name>(6S)-5-formyl-5,6,7,8-tetrahydrofolate</name>
        <dbReference type="ChEBI" id="CHEBI:57457"/>
    </ligand>
</feature>
<feature type="binding site" evidence="1">
    <location>
        <begin position="221"/>
        <end position="226"/>
    </location>
    <ligand>
        <name>GTP</name>
        <dbReference type="ChEBI" id="CHEBI:37565"/>
    </ligand>
</feature>
<feature type="binding site" evidence="1">
    <location>
        <position position="225"/>
    </location>
    <ligand>
        <name>Mg(2+)</name>
        <dbReference type="ChEBI" id="CHEBI:18420"/>
    </ligand>
</feature>
<feature type="binding site" evidence="1">
    <location>
        <begin position="240"/>
        <end position="246"/>
    </location>
    <ligand>
        <name>GTP</name>
        <dbReference type="ChEBI" id="CHEBI:37565"/>
    </ligand>
</feature>
<feature type="binding site" evidence="1">
    <location>
        <position position="246"/>
    </location>
    <ligand>
        <name>Mg(2+)</name>
        <dbReference type="ChEBI" id="CHEBI:18420"/>
    </ligand>
</feature>
<feature type="binding site" evidence="1">
    <location>
        <begin position="265"/>
        <end position="268"/>
    </location>
    <ligand>
        <name>GTP</name>
        <dbReference type="ChEBI" id="CHEBI:37565"/>
    </ligand>
</feature>
<feature type="binding site" evidence="1">
    <location>
        <position position="438"/>
    </location>
    <ligand>
        <name>(6S)-5-formyl-5,6,7,8-tetrahydrofolate</name>
        <dbReference type="ChEBI" id="CHEBI:57457"/>
    </ligand>
</feature>
<gene>
    <name evidence="1" type="primary">mnmE</name>
    <name evidence="1" type="synonym">trmE</name>
    <name type="ordered locus">CFF8240_0555</name>
</gene>
<sequence>MNIVALASAYGVGSISIVRLSGDGAYDLAINLCKKPLTPRYAHLRKLYCENMVFLDEAIVIYYKAPFSFTGEDVVEFQTHGGVVVANLIIDELLRLGARVANPGEFSKRAFLNGKMDLVKAESIQSLINARSEGAAKILARTMNGELSVFVNSLRDELIKILAYTETCIDYADDDLPSDILHSSKDLLLNSYKKLEHIINISNSKKGLIDGYKVAIIGRPNVGKSSILNSLLHYERAITSETAGTTRDTIEEQIKFGSHLVRIIDTAGIRDEFDSSIEAAGIEYSKRAAREADIIFCVFDSSQKASLEDRQILEFISNLNKKTIYVLNKSDLEFKFDISLNAVLVSAKLDSTPLSKELESYLNSQDTNDIMLSSNRQIEASRLASEAIKNALELLNESELELFAYELNIALKHIGSITKPMENSELLDKMFSSFCLGK</sequence>
<keyword id="KW-0963">Cytoplasm</keyword>
<keyword id="KW-0342">GTP-binding</keyword>
<keyword id="KW-0378">Hydrolase</keyword>
<keyword id="KW-0460">Magnesium</keyword>
<keyword id="KW-0479">Metal-binding</keyword>
<keyword id="KW-0547">Nucleotide-binding</keyword>
<keyword id="KW-0630">Potassium</keyword>
<keyword id="KW-0819">tRNA processing</keyword>
<proteinExistence type="inferred from homology"/>